<proteinExistence type="evidence at protein level"/>
<dbReference type="EC" id="1.-.-.-"/>
<dbReference type="EMBL" id="L78833">
    <property type="protein sequence ID" value="AAC37596.1"/>
    <property type="status" value="ALT_INIT"/>
    <property type="molecule type" value="Genomic_DNA"/>
</dbReference>
<dbReference type="EMBL" id="BT007369">
    <property type="protein sequence ID" value="AAP36033.1"/>
    <property type="molecule type" value="mRNA"/>
</dbReference>
<dbReference type="EMBL" id="AK298536">
    <property type="protein sequence ID" value="BAG60736.1"/>
    <property type="molecule type" value="mRNA"/>
</dbReference>
<dbReference type="EMBL" id="AK290460">
    <property type="protein sequence ID" value="BAF83149.1"/>
    <property type="molecule type" value="mRNA"/>
</dbReference>
<dbReference type="EMBL" id="AK315838">
    <property type="protein sequence ID" value="BAF98729.1"/>
    <property type="molecule type" value="mRNA"/>
</dbReference>
<dbReference type="EMBL" id="AC055866">
    <property type="status" value="NOT_ANNOTATED_CDS"/>
    <property type="molecule type" value="Genomic_DNA"/>
</dbReference>
<dbReference type="EMBL" id="AC135721">
    <property type="status" value="NOT_ANNOTATED_CDS"/>
    <property type="molecule type" value="Genomic_DNA"/>
</dbReference>
<dbReference type="EMBL" id="CH471152">
    <property type="protein sequence ID" value="EAW60917.1"/>
    <property type="molecule type" value="Genomic_DNA"/>
</dbReference>
<dbReference type="EMBL" id="BC001913">
    <property type="protein sequence ID" value="AAH01913.2"/>
    <property type="molecule type" value="mRNA"/>
</dbReference>
<dbReference type="EMBL" id="BC008725">
    <property type="protein sequence ID" value="AAH08725.2"/>
    <property type="molecule type" value="mRNA"/>
</dbReference>
<dbReference type="EMBL" id="BC014279">
    <property type="protein sequence ID" value="AAH14279.1"/>
    <property type="molecule type" value="mRNA"/>
</dbReference>
<dbReference type="EMBL" id="BC015041">
    <property type="protein sequence ID" value="AAH15041.1"/>
    <property type="molecule type" value="mRNA"/>
</dbReference>
<dbReference type="EMBL" id="BC090858">
    <property type="protein sequence ID" value="AAH90858.1"/>
    <property type="molecule type" value="mRNA"/>
</dbReference>
<dbReference type="EMBL" id="U18009">
    <property type="protein sequence ID" value="AAA95990.1"/>
    <property type="molecule type" value="mRNA"/>
</dbReference>
<dbReference type="CCDS" id="CCDS11451.1">
    <molecule id="Q99536-1"/>
</dbReference>
<dbReference type="RefSeq" id="NP_006364.2">
    <molecule id="Q99536-1"/>
    <property type="nucleotide sequence ID" value="NM_006373.3"/>
</dbReference>
<dbReference type="PDB" id="6K9Y">
    <property type="method" value="X-ray"/>
    <property type="resolution" value="2.20 A"/>
    <property type="chains" value="A/B/C/D=41-393"/>
</dbReference>
<dbReference type="PDB" id="6LHR">
    <property type="method" value="X-ray"/>
    <property type="resolution" value="2.62 A"/>
    <property type="chains" value="A/B/C/D=43-393"/>
</dbReference>
<dbReference type="PDB" id="6LII">
    <property type="method" value="X-ray"/>
    <property type="resolution" value="2.30 A"/>
    <property type="chains" value="A/B/C/D=43-393"/>
</dbReference>
<dbReference type="PDBsum" id="6K9Y"/>
<dbReference type="PDBsum" id="6LHR"/>
<dbReference type="PDBsum" id="6LII"/>
<dbReference type="SMR" id="Q99536"/>
<dbReference type="BioGRID" id="115756">
    <property type="interactions" value="141"/>
</dbReference>
<dbReference type="FunCoup" id="Q99536">
    <property type="interactions" value="180"/>
</dbReference>
<dbReference type="IntAct" id="Q99536">
    <property type="interactions" value="28"/>
</dbReference>
<dbReference type="MINT" id="Q99536"/>
<dbReference type="STRING" id="9606.ENSP00000347872"/>
<dbReference type="BindingDB" id="Q99536"/>
<dbReference type="ChEMBL" id="CHEMBL4802015"/>
<dbReference type="GlyGen" id="Q99536">
    <property type="glycosylation" value="2 sites, 1 O-linked glycan (1 site)"/>
</dbReference>
<dbReference type="iPTMnet" id="Q99536"/>
<dbReference type="MetOSite" id="Q99536"/>
<dbReference type="PhosphoSitePlus" id="Q99536"/>
<dbReference type="SwissPalm" id="Q99536"/>
<dbReference type="BioMuta" id="VAT1"/>
<dbReference type="DMDM" id="52788294"/>
<dbReference type="jPOST" id="Q99536"/>
<dbReference type="MassIVE" id="Q99536"/>
<dbReference type="PaxDb" id="9606-ENSP00000347872"/>
<dbReference type="PeptideAtlas" id="Q99536"/>
<dbReference type="PRIDE" id="Q99536"/>
<dbReference type="ProteomicsDB" id="2531"/>
<dbReference type="ProteomicsDB" id="78312">
    <molecule id="Q99536-1"/>
</dbReference>
<dbReference type="Pumba" id="Q99536"/>
<dbReference type="TopDownProteomics" id="Q99536-1">
    <molecule id="Q99536-1"/>
</dbReference>
<dbReference type="Antibodypedia" id="29494">
    <property type="antibodies" value="88 antibodies from 25 providers"/>
</dbReference>
<dbReference type="DNASU" id="10493"/>
<dbReference type="Ensembl" id="ENST00000355653.8">
    <molecule id="Q99536-1"/>
    <property type="protein sequence ID" value="ENSP00000347872.2"/>
    <property type="gene ID" value="ENSG00000108828.16"/>
</dbReference>
<dbReference type="Ensembl" id="ENST00000420567.7">
    <molecule id="Q99536-2"/>
    <property type="protein sequence ID" value="ENSP00000408553.2"/>
    <property type="gene ID" value="ENSG00000108828.16"/>
</dbReference>
<dbReference type="Ensembl" id="ENST00000587173.5">
    <molecule id="Q99536-3"/>
    <property type="protein sequence ID" value="ENSP00000465946.1"/>
    <property type="gene ID" value="ENSG00000108828.16"/>
</dbReference>
<dbReference type="GeneID" id="10493"/>
<dbReference type="KEGG" id="hsa:10493"/>
<dbReference type="MANE-Select" id="ENST00000355653.8">
    <property type="protein sequence ID" value="ENSP00000347872.2"/>
    <property type="RefSeq nucleotide sequence ID" value="NM_006373.4"/>
    <property type="RefSeq protein sequence ID" value="NP_006364.2"/>
</dbReference>
<dbReference type="UCSC" id="uc002icm.2">
    <molecule id="Q99536-1"/>
    <property type="organism name" value="human"/>
</dbReference>
<dbReference type="AGR" id="HGNC:16919"/>
<dbReference type="CTD" id="10493"/>
<dbReference type="DisGeNET" id="10493"/>
<dbReference type="GeneCards" id="VAT1"/>
<dbReference type="HGNC" id="HGNC:16919">
    <property type="gene designation" value="VAT1"/>
</dbReference>
<dbReference type="HPA" id="ENSG00000108828">
    <property type="expression patterns" value="Low tissue specificity"/>
</dbReference>
<dbReference type="MIM" id="604631">
    <property type="type" value="gene"/>
</dbReference>
<dbReference type="neXtProt" id="NX_Q99536"/>
<dbReference type="OpenTargets" id="ENSG00000108828"/>
<dbReference type="VEuPathDB" id="HostDB:ENSG00000108828"/>
<dbReference type="eggNOG" id="KOG1197">
    <property type="taxonomic scope" value="Eukaryota"/>
</dbReference>
<dbReference type="GeneTree" id="ENSGT00940000157579"/>
<dbReference type="HOGENOM" id="CLU_026673_3_1_1"/>
<dbReference type="InParanoid" id="Q99536"/>
<dbReference type="OMA" id="RPATWFT"/>
<dbReference type="OrthoDB" id="203908at2759"/>
<dbReference type="PAN-GO" id="Q99536">
    <property type="GO annotations" value="2 GO annotations based on evolutionary models"/>
</dbReference>
<dbReference type="PhylomeDB" id="Q99536"/>
<dbReference type="TreeFam" id="TF314255"/>
<dbReference type="PathwayCommons" id="Q99536"/>
<dbReference type="Reactome" id="R-HSA-6798695">
    <property type="pathway name" value="Neutrophil degranulation"/>
</dbReference>
<dbReference type="SignaLink" id="Q99536"/>
<dbReference type="BioGRID-ORCS" id="10493">
    <property type="hits" value="13 hits in 1161 CRISPR screens"/>
</dbReference>
<dbReference type="CD-CODE" id="FB4E32DD">
    <property type="entry name" value="Presynaptic clusters and postsynaptic densities"/>
</dbReference>
<dbReference type="ChiTaRS" id="VAT1">
    <property type="organism name" value="human"/>
</dbReference>
<dbReference type="GeneWiki" id="VAT1"/>
<dbReference type="GenomeRNAi" id="10493"/>
<dbReference type="Pharos" id="Q99536">
    <property type="development level" value="Tbio"/>
</dbReference>
<dbReference type="PRO" id="PR:Q99536"/>
<dbReference type="Proteomes" id="UP000005640">
    <property type="component" value="Chromosome 17"/>
</dbReference>
<dbReference type="RNAct" id="Q99536">
    <property type="molecule type" value="protein"/>
</dbReference>
<dbReference type="Bgee" id="ENSG00000108828">
    <property type="expression patterns" value="Expressed in right adrenal gland cortex and 206 other cell types or tissues"/>
</dbReference>
<dbReference type="ExpressionAtlas" id="Q99536">
    <property type="expression patterns" value="baseline and differential"/>
</dbReference>
<dbReference type="GO" id="GO:0035578">
    <property type="term" value="C:azurophil granule lumen"/>
    <property type="evidence" value="ECO:0000304"/>
    <property type="project" value="Reactome"/>
</dbReference>
<dbReference type="GO" id="GO:0070062">
    <property type="term" value="C:extracellular exosome"/>
    <property type="evidence" value="ECO:0007005"/>
    <property type="project" value="UniProtKB"/>
</dbReference>
<dbReference type="GO" id="GO:0005576">
    <property type="term" value="C:extracellular region"/>
    <property type="evidence" value="ECO:0000304"/>
    <property type="project" value="Reactome"/>
</dbReference>
<dbReference type="GO" id="GO:0016020">
    <property type="term" value="C:membrane"/>
    <property type="evidence" value="ECO:0000304"/>
    <property type="project" value="ProtInc"/>
</dbReference>
<dbReference type="GO" id="GO:0005741">
    <property type="term" value="C:mitochondrial outer membrane"/>
    <property type="evidence" value="ECO:0000318"/>
    <property type="project" value="GO_Central"/>
</dbReference>
<dbReference type="GO" id="GO:0016491">
    <property type="term" value="F:oxidoreductase activity"/>
    <property type="evidence" value="ECO:0007669"/>
    <property type="project" value="UniProtKB-KW"/>
</dbReference>
<dbReference type="GO" id="GO:0008270">
    <property type="term" value="F:zinc ion binding"/>
    <property type="evidence" value="ECO:0007669"/>
    <property type="project" value="InterPro"/>
</dbReference>
<dbReference type="GO" id="GO:0010637">
    <property type="term" value="P:negative regulation of mitochondrial fusion"/>
    <property type="evidence" value="ECO:0000315"/>
    <property type="project" value="UniProtKB"/>
</dbReference>
<dbReference type="CDD" id="cd08275">
    <property type="entry name" value="MDR3"/>
    <property type="match status" value="1"/>
</dbReference>
<dbReference type="FunFam" id="3.40.50.720:FF:000309">
    <property type="entry name" value="synaptic vesicle membrane protein VAT-1 homolog"/>
    <property type="match status" value="1"/>
</dbReference>
<dbReference type="Gene3D" id="3.90.180.10">
    <property type="entry name" value="Medium-chain alcohol dehydrogenases, catalytic domain"/>
    <property type="match status" value="1"/>
</dbReference>
<dbReference type="Gene3D" id="3.40.50.720">
    <property type="entry name" value="NAD(P)-binding Rossmann-like Domain"/>
    <property type="match status" value="1"/>
</dbReference>
<dbReference type="InterPro" id="IPR013154">
    <property type="entry name" value="ADH-like_N"/>
</dbReference>
<dbReference type="InterPro" id="IPR011032">
    <property type="entry name" value="GroES-like_sf"/>
</dbReference>
<dbReference type="InterPro" id="IPR036291">
    <property type="entry name" value="NAD(P)-bd_dom_sf"/>
</dbReference>
<dbReference type="InterPro" id="IPR020843">
    <property type="entry name" value="PKS_ER"/>
</dbReference>
<dbReference type="InterPro" id="IPR002364">
    <property type="entry name" value="Quin_OxRdtase/zeta-crystal_CS"/>
</dbReference>
<dbReference type="InterPro" id="IPR052100">
    <property type="entry name" value="SV-ATPase_mito-regulator"/>
</dbReference>
<dbReference type="PANTHER" id="PTHR44054:SF1">
    <property type="entry name" value="SYNAPTIC VESICLE MEMBRANE PROTEIN VAT-1 HOMOLOG"/>
    <property type="match status" value="1"/>
</dbReference>
<dbReference type="PANTHER" id="PTHR44054">
    <property type="entry name" value="SYNAPTIC VESICLE MEMBRANE PROTEIN VAT-1 HOMOLOG-LIKE"/>
    <property type="match status" value="1"/>
</dbReference>
<dbReference type="Pfam" id="PF08240">
    <property type="entry name" value="ADH_N"/>
    <property type="match status" value="1"/>
</dbReference>
<dbReference type="Pfam" id="PF13602">
    <property type="entry name" value="ADH_zinc_N_2"/>
    <property type="match status" value="1"/>
</dbReference>
<dbReference type="SMART" id="SM00829">
    <property type="entry name" value="PKS_ER"/>
    <property type="match status" value="1"/>
</dbReference>
<dbReference type="SUPFAM" id="SSF50129">
    <property type="entry name" value="GroES-like"/>
    <property type="match status" value="1"/>
</dbReference>
<dbReference type="SUPFAM" id="SSF51735">
    <property type="entry name" value="NAD(P)-binding Rossmann-fold domains"/>
    <property type="match status" value="1"/>
</dbReference>
<dbReference type="PROSITE" id="PS01162">
    <property type="entry name" value="QOR_ZETA_CRYSTAL"/>
    <property type="match status" value="1"/>
</dbReference>
<protein>
    <recommendedName>
        <fullName>Synaptic vesicle membrane protein VAT-1 homolog</fullName>
        <ecNumber>1.-.-.-</ecNumber>
    </recommendedName>
</protein>
<accession>Q99536</accession>
<accession>A8K345</accession>
<accession>B0AZP7</accession>
<accession>B4DPX4</accession>
<accession>Q13035</accession>
<accession>Q5BKZ7</accession>
<accession>Q96A39</accession>
<accession>Q9BUT8</accession>
<name>VAT1_HUMAN</name>
<organism>
    <name type="scientific">Homo sapiens</name>
    <name type="common">Human</name>
    <dbReference type="NCBI Taxonomy" id="9606"/>
    <lineage>
        <taxon>Eukaryota</taxon>
        <taxon>Metazoa</taxon>
        <taxon>Chordata</taxon>
        <taxon>Craniata</taxon>
        <taxon>Vertebrata</taxon>
        <taxon>Euteleostomi</taxon>
        <taxon>Mammalia</taxon>
        <taxon>Eutheria</taxon>
        <taxon>Euarchontoglires</taxon>
        <taxon>Primates</taxon>
        <taxon>Haplorrhini</taxon>
        <taxon>Catarrhini</taxon>
        <taxon>Hominidae</taxon>
        <taxon>Homo</taxon>
    </lineage>
</organism>
<reference key="1">
    <citation type="journal article" date="1996" name="Genome Res.">
        <title>Complete genomic sequence and analysis of 117 kb of human DNA containing the gene BRCA1.</title>
        <authorList>
            <person name="Smith T.M."/>
            <person name="Lee M.K."/>
            <person name="Szabo C.I."/>
            <person name="Jerome N."/>
            <person name="McEuen M."/>
            <person name="Taylor M."/>
            <person name="Hood L."/>
            <person name="King M.-C."/>
        </authorList>
    </citation>
    <scope>NUCLEOTIDE SEQUENCE [GENOMIC DNA]</scope>
</reference>
<reference key="2">
    <citation type="submission" date="2003-05" db="EMBL/GenBank/DDBJ databases">
        <title>Cloning of human full-length CDSs in BD Creator(TM) system donor vector.</title>
        <authorList>
            <person name="Kalnine N."/>
            <person name="Chen X."/>
            <person name="Rolfs A."/>
            <person name="Halleck A."/>
            <person name="Hines L."/>
            <person name="Eisenstein S."/>
            <person name="Koundinya M."/>
            <person name="Raphael J."/>
            <person name="Moreira D."/>
            <person name="Kelley T."/>
            <person name="LaBaer J."/>
            <person name="Lin Y."/>
            <person name="Phelan M."/>
            <person name="Farmer A."/>
        </authorList>
    </citation>
    <scope>NUCLEOTIDE SEQUENCE [LARGE SCALE MRNA] (ISOFORM 1)</scope>
</reference>
<reference key="3">
    <citation type="journal article" date="2004" name="Nat. Genet.">
        <title>Complete sequencing and characterization of 21,243 full-length human cDNAs.</title>
        <authorList>
            <person name="Ota T."/>
            <person name="Suzuki Y."/>
            <person name="Nishikawa T."/>
            <person name="Otsuki T."/>
            <person name="Sugiyama T."/>
            <person name="Irie R."/>
            <person name="Wakamatsu A."/>
            <person name="Hayashi K."/>
            <person name="Sato H."/>
            <person name="Nagai K."/>
            <person name="Kimura K."/>
            <person name="Makita H."/>
            <person name="Sekine M."/>
            <person name="Obayashi M."/>
            <person name="Nishi T."/>
            <person name="Shibahara T."/>
            <person name="Tanaka T."/>
            <person name="Ishii S."/>
            <person name="Yamamoto J."/>
            <person name="Saito K."/>
            <person name="Kawai Y."/>
            <person name="Isono Y."/>
            <person name="Nakamura Y."/>
            <person name="Nagahari K."/>
            <person name="Murakami K."/>
            <person name="Yasuda T."/>
            <person name="Iwayanagi T."/>
            <person name="Wagatsuma M."/>
            <person name="Shiratori A."/>
            <person name="Sudo H."/>
            <person name="Hosoiri T."/>
            <person name="Kaku Y."/>
            <person name="Kodaira H."/>
            <person name="Kondo H."/>
            <person name="Sugawara M."/>
            <person name="Takahashi M."/>
            <person name="Kanda K."/>
            <person name="Yokoi T."/>
            <person name="Furuya T."/>
            <person name="Kikkawa E."/>
            <person name="Omura Y."/>
            <person name="Abe K."/>
            <person name="Kamihara K."/>
            <person name="Katsuta N."/>
            <person name="Sato K."/>
            <person name="Tanikawa M."/>
            <person name="Yamazaki M."/>
            <person name="Ninomiya K."/>
            <person name="Ishibashi T."/>
            <person name="Yamashita H."/>
            <person name="Murakawa K."/>
            <person name="Fujimori K."/>
            <person name="Tanai H."/>
            <person name="Kimata M."/>
            <person name="Watanabe M."/>
            <person name="Hiraoka S."/>
            <person name="Chiba Y."/>
            <person name="Ishida S."/>
            <person name="Ono Y."/>
            <person name="Takiguchi S."/>
            <person name="Watanabe S."/>
            <person name="Yosida M."/>
            <person name="Hotuta T."/>
            <person name="Kusano J."/>
            <person name="Kanehori K."/>
            <person name="Takahashi-Fujii A."/>
            <person name="Hara H."/>
            <person name="Tanase T.-O."/>
            <person name="Nomura Y."/>
            <person name="Togiya S."/>
            <person name="Komai F."/>
            <person name="Hara R."/>
            <person name="Takeuchi K."/>
            <person name="Arita M."/>
            <person name="Imose N."/>
            <person name="Musashino K."/>
            <person name="Yuuki H."/>
            <person name="Oshima A."/>
            <person name="Sasaki N."/>
            <person name="Aotsuka S."/>
            <person name="Yoshikawa Y."/>
            <person name="Matsunawa H."/>
            <person name="Ichihara T."/>
            <person name="Shiohata N."/>
            <person name="Sano S."/>
            <person name="Moriya S."/>
            <person name="Momiyama H."/>
            <person name="Satoh N."/>
            <person name="Takami S."/>
            <person name="Terashima Y."/>
            <person name="Suzuki O."/>
            <person name="Nakagawa S."/>
            <person name="Senoh A."/>
            <person name="Mizoguchi H."/>
            <person name="Goto Y."/>
            <person name="Shimizu F."/>
            <person name="Wakebe H."/>
            <person name="Hishigaki H."/>
            <person name="Watanabe T."/>
            <person name="Sugiyama A."/>
            <person name="Takemoto M."/>
            <person name="Kawakami B."/>
            <person name="Yamazaki M."/>
            <person name="Watanabe K."/>
            <person name="Kumagai A."/>
            <person name="Itakura S."/>
            <person name="Fukuzumi Y."/>
            <person name="Fujimori Y."/>
            <person name="Komiyama M."/>
            <person name="Tashiro H."/>
            <person name="Tanigami A."/>
            <person name="Fujiwara T."/>
            <person name="Ono T."/>
            <person name="Yamada K."/>
            <person name="Fujii Y."/>
            <person name="Ozaki K."/>
            <person name="Hirao M."/>
            <person name="Ohmori Y."/>
            <person name="Kawabata A."/>
            <person name="Hikiji T."/>
            <person name="Kobatake N."/>
            <person name="Inagaki H."/>
            <person name="Ikema Y."/>
            <person name="Okamoto S."/>
            <person name="Okitani R."/>
            <person name="Kawakami T."/>
            <person name="Noguchi S."/>
            <person name="Itoh T."/>
            <person name="Shigeta K."/>
            <person name="Senba T."/>
            <person name="Matsumura K."/>
            <person name="Nakajima Y."/>
            <person name="Mizuno T."/>
            <person name="Morinaga M."/>
            <person name="Sasaki M."/>
            <person name="Togashi T."/>
            <person name="Oyama M."/>
            <person name="Hata H."/>
            <person name="Watanabe M."/>
            <person name="Komatsu T."/>
            <person name="Mizushima-Sugano J."/>
            <person name="Satoh T."/>
            <person name="Shirai Y."/>
            <person name="Takahashi Y."/>
            <person name="Nakagawa K."/>
            <person name="Okumura K."/>
            <person name="Nagase T."/>
            <person name="Nomura N."/>
            <person name="Kikuchi H."/>
            <person name="Masuho Y."/>
            <person name="Yamashita R."/>
            <person name="Nakai K."/>
            <person name="Yada T."/>
            <person name="Nakamura Y."/>
            <person name="Ohara O."/>
            <person name="Isogai T."/>
            <person name="Sugano S."/>
        </authorList>
    </citation>
    <scope>NUCLEOTIDE SEQUENCE [LARGE SCALE MRNA] (ISOFORMS 1; 2 AND 3)</scope>
    <source>
        <tissue>Brain</tissue>
    </source>
</reference>
<reference key="4">
    <citation type="submission" date="2005-07" db="EMBL/GenBank/DDBJ databases">
        <authorList>
            <person name="Mural R.J."/>
            <person name="Istrail S."/>
            <person name="Sutton G.G."/>
            <person name="Florea L."/>
            <person name="Halpern A.L."/>
            <person name="Mobarry C.M."/>
            <person name="Lippert R."/>
            <person name="Walenz B."/>
            <person name="Shatkay H."/>
            <person name="Dew I."/>
            <person name="Miller J.R."/>
            <person name="Flanigan M.J."/>
            <person name="Edwards N.J."/>
            <person name="Bolanos R."/>
            <person name="Fasulo D."/>
            <person name="Halldorsson B.V."/>
            <person name="Hannenhalli S."/>
            <person name="Turner R."/>
            <person name="Yooseph S."/>
            <person name="Lu F."/>
            <person name="Nusskern D.R."/>
            <person name="Shue B.C."/>
            <person name="Zheng X.H."/>
            <person name="Zhong F."/>
            <person name="Delcher A.L."/>
            <person name="Huson D.H."/>
            <person name="Kravitz S.A."/>
            <person name="Mouchard L."/>
            <person name="Reinert K."/>
            <person name="Remington K.A."/>
            <person name="Clark A.G."/>
            <person name="Waterman M.S."/>
            <person name="Eichler E.E."/>
            <person name="Adams M.D."/>
            <person name="Hunkapiller M.W."/>
            <person name="Myers E.W."/>
            <person name="Venter J.C."/>
        </authorList>
    </citation>
    <scope>NUCLEOTIDE SEQUENCE [LARGE SCALE GENOMIC DNA]</scope>
</reference>
<reference key="5">
    <citation type="journal article" date="2004" name="Genome Res.">
        <title>The status, quality, and expansion of the NIH full-length cDNA project: the Mammalian Gene Collection (MGC).</title>
        <authorList>
            <consortium name="The MGC Project Team"/>
        </authorList>
    </citation>
    <scope>NUCLEOTIDE SEQUENCE [LARGE SCALE MRNA] (ISOFORM 1)</scope>
    <source>
        <tissue>Brain</tissue>
        <tissue>Ovary</tissue>
        <tissue>Skin</tissue>
        <tissue>Uterus</tissue>
    </source>
</reference>
<reference key="6">
    <citation type="journal article" date="2006" name="Nature">
        <title>DNA sequence of human chromosome 17 and analysis of rearrangement in the human lineage.</title>
        <authorList>
            <person name="Zody M.C."/>
            <person name="Garber M."/>
            <person name="Adams D.J."/>
            <person name="Sharpe T."/>
            <person name="Harrow J."/>
            <person name="Lupski J.R."/>
            <person name="Nicholson C."/>
            <person name="Searle S.M."/>
            <person name="Wilming L."/>
            <person name="Young S.K."/>
            <person name="Abouelleil A."/>
            <person name="Allen N.R."/>
            <person name="Bi W."/>
            <person name="Bloom T."/>
            <person name="Borowsky M.L."/>
            <person name="Bugalter B.E."/>
            <person name="Butler J."/>
            <person name="Chang J.L."/>
            <person name="Chen C.-K."/>
            <person name="Cook A."/>
            <person name="Corum B."/>
            <person name="Cuomo C.A."/>
            <person name="de Jong P.J."/>
            <person name="DeCaprio D."/>
            <person name="Dewar K."/>
            <person name="FitzGerald M."/>
            <person name="Gilbert J."/>
            <person name="Gibson R."/>
            <person name="Gnerre S."/>
            <person name="Goldstein S."/>
            <person name="Grafham D.V."/>
            <person name="Grocock R."/>
            <person name="Hafez N."/>
            <person name="Hagopian D.S."/>
            <person name="Hart E."/>
            <person name="Norman C.H."/>
            <person name="Humphray S."/>
            <person name="Jaffe D.B."/>
            <person name="Jones M."/>
            <person name="Kamal M."/>
            <person name="Khodiyar V.K."/>
            <person name="LaButti K."/>
            <person name="Laird G."/>
            <person name="Lehoczky J."/>
            <person name="Liu X."/>
            <person name="Lokyitsang T."/>
            <person name="Loveland J."/>
            <person name="Lui A."/>
            <person name="Macdonald P."/>
            <person name="Major J.E."/>
            <person name="Matthews L."/>
            <person name="Mauceli E."/>
            <person name="McCarroll S.A."/>
            <person name="Mihalev A.H."/>
            <person name="Mudge J."/>
            <person name="Nguyen C."/>
            <person name="Nicol R."/>
            <person name="O'Leary S.B."/>
            <person name="Osoegawa K."/>
            <person name="Schwartz D.C."/>
            <person name="Shaw-Smith C."/>
            <person name="Stankiewicz P."/>
            <person name="Steward C."/>
            <person name="Swarbreck D."/>
            <person name="Venkataraman V."/>
            <person name="Whittaker C.A."/>
            <person name="Yang X."/>
            <person name="Zimmer A.R."/>
            <person name="Bradley A."/>
            <person name="Hubbard T."/>
            <person name="Birren B.W."/>
            <person name="Rogers J."/>
            <person name="Lander E.S."/>
            <person name="Nusbaum C."/>
        </authorList>
    </citation>
    <scope>NUCLEOTIDE SEQUENCE [LARGE SCALE GENOMIC DNA]</scope>
</reference>
<reference key="7">
    <citation type="submission" date="2010-01" db="UniProtKB">
        <authorList>
            <person name="Bienvenut W.V."/>
        </authorList>
    </citation>
    <scope>PROTEIN SEQUENCE OF 2-61; 64-82; 85-96; 103-128; 211-225; 256-271; 282-295 AND 322-344</scope>
    <scope>CLEAVAGE OF INITIATOR METHIONINE</scope>
    <scope>ACETYLATION AT SER-2</scope>
    <scope>IDENTIFICATION BY MASS SPECTROMETRY</scope>
    <source>
        <tissue>Ovarian carcinoma</tissue>
    </source>
</reference>
<reference key="8">
    <citation type="journal article" date="1995" name="Genomics">
        <title>22 genes from chromosome 17q21: cloning, sequencing, and characterization of mutations in breast cancer families and tumors.</title>
        <authorList>
            <person name="Friedman L.S."/>
            <person name="Ostermeyer E.A."/>
            <person name="Lynch E.D."/>
            <person name="Szabo C.I."/>
            <person name="Meza J.E."/>
            <person name="Anderson L.A."/>
            <person name="Dowd P."/>
            <person name="Lee M.K."/>
            <person name="Rowell S.E."/>
            <person name="Ellison J."/>
            <person name="Boyd J."/>
            <person name="King M.-C."/>
        </authorList>
    </citation>
    <scope>NUCLEOTIDE SEQUENCE [MRNA] OF 82-393 (ISOFORM 1)</scope>
</reference>
<reference key="9">
    <citation type="journal article" date="2003" name="Arch. Dermatol. Res.">
        <title>Human VAT-1: a calcium-regulated activation marker of human epithelial cells.</title>
        <authorList>
            <person name="Koch J."/>
            <person name="Foekens J."/>
            <person name="Timmermans M."/>
            <person name="Fink W."/>
            <person name="Wirzbach A."/>
            <person name="Kramer M.D."/>
            <person name="Schaefer B.M."/>
        </authorList>
    </citation>
    <scope>FUNCTION</scope>
    <scope>SUBCELLULAR LOCATION</scope>
</reference>
<reference key="10">
    <citation type="journal article" date="2006" name="J. Cell Sci.">
        <title>Identification of a novel protein that regulates mitochondrial fusion by modulating mitofusin (Mfn) protein function.</title>
        <authorList>
            <person name="Eura Y."/>
            <person name="Ishihara N."/>
            <person name="Oka T."/>
            <person name="Mihara K."/>
        </authorList>
    </citation>
    <scope>FUNCTION</scope>
    <scope>SUBCELLULAR LOCATION</scope>
    <scope>INTERACTION WITH MFN1 AND MFN2</scope>
</reference>
<reference key="11">
    <citation type="journal article" date="2006" name="Nat. Biotechnol.">
        <title>A probability-based approach for high-throughput protein phosphorylation analysis and site localization.</title>
        <authorList>
            <person name="Beausoleil S.A."/>
            <person name="Villen J."/>
            <person name="Gerber S.A."/>
            <person name="Rush J."/>
            <person name="Gygi S.P."/>
        </authorList>
    </citation>
    <scope>IDENTIFICATION BY MASS SPECTROMETRY [LARGE SCALE ANALYSIS]</scope>
    <source>
        <tissue>Cervix carcinoma</tissue>
    </source>
</reference>
<reference key="12">
    <citation type="journal article" date="2008" name="Proc. Natl. Acad. Sci. U.S.A.">
        <title>A quantitative atlas of mitotic phosphorylation.</title>
        <authorList>
            <person name="Dephoure N."/>
            <person name="Zhou C."/>
            <person name="Villen J."/>
            <person name="Beausoleil S.A."/>
            <person name="Bakalarski C.E."/>
            <person name="Elledge S.J."/>
            <person name="Gygi S.P."/>
        </authorList>
    </citation>
    <scope>IDENTIFICATION BY MASS SPECTROMETRY [LARGE SCALE ANALYSIS]</scope>
    <source>
        <tissue>Cervix carcinoma</tissue>
    </source>
</reference>
<reference key="13">
    <citation type="journal article" date="2009" name="Anal. Chem.">
        <title>Lys-N and trypsin cover complementary parts of the phosphoproteome in a refined SCX-based approach.</title>
        <authorList>
            <person name="Gauci S."/>
            <person name="Helbig A.O."/>
            <person name="Slijper M."/>
            <person name="Krijgsveld J."/>
            <person name="Heck A.J."/>
            <person name="Mohammed S."/>
        </authorList>
    </citation>
    <scope>ACETYLATION [LARGE SCALE ANALYSIS] AT SER-2</scope>
    <scope>CLEAVAGE OF INITIATOR METHIONINE [LARGE SCALE ANALYSIS]</scope>
    <scope>IDENTIFICATION BY MASS SPECTROMETRY [LARGE SCALE ANALYSIS]</scope>
</reference>
<reference key="14">
    <citation type="journal article" date="2009" name="Neuropathol. Appl. Neurobiol.">
        <title>Vesicle amine transport protein-1 (VAT-1) is upregulated in glioblastomas and promotes migration.</title>
        <authorList>
            <person name="Mertsch S."/>
            <person name="Becker M."/>
            <person name="Lichota A."/>
            <person name="Paulus W."/>
            <person name="Senner V."/>
        </authorList>
    </citation>
    <scope>FUNCTION</scope>
    <scope>TISSUE SPECIFICITY</scope>
    <scope>SUBCELLULAR LOCATION</scope>
    <scope>INDUCTION BY WOUNDING</scope>
</reference>
<reference key="15">
    <citation type="journal article" date="2010" name="Sci. Signal.">
        <title>Quantitative phosphoproteomics reveals widespread full phosphorylation site occupancy during mitosis.</title>
        <authorList>
            <person name="Olsen J.V."/>
            <person name="Vermeulen M."/>
            <person name="Santamaria A."/>
            <person name="Kumar C."/>
            <person name="Miller M.L."/>
            <person name="Jensen L.J."/>
            <person name="Gnad F."/>
            <person name="Cox J."/>
            <person name="Jensen T.S."/>
            <person name="Nigg E.A."/>
            <person name="Brunak S."/>
            <person name="Mann M."/>
        </authorList>
    </citation>
    <scope>PHOSPHORYLATION [LARGE SCALE ANALYSIS] AT SER-18</scope>
    <scope>IDENTIFICATION BY MASS SPECTROMETRY [LARGE SCALE ANALYSIS]</scope>
    <source>
        <tissue>Cervix carcinoma</tissue>
    </source>
</reference>
<reference key="16">
    <citation type="journal article" date="2011" name="BMC Syst. Biol.">
        <title>Initial characterization of the human central proteome.</title>
        <authorList>
            <person name="Burkard T.R."/>
            <person name="Planyavsky M."/>
            <person name="Kaupe I."/>
            <person name="Breitwieser F.P."/>
            <person name="Buerckstuemmer T."/>
            <person name="Bennett K.L."/>
            <person name="Superti-Furga G."/>
            <person name="Colinge J."/>
        </authorList>
    </citation>
    <scope>IDENTIFICATION BY MASS SPECTROMETRY [LARGE SCALE ANALYSIS]</scope>
</reference>
<reference key="17">
    <citation type="journal article" date="2014" name="J. Proteomics">
        <title>An enzyme assisted RP-RPLC approach for in-depth analysis of human liver phosphoproteome.</title>
        <authorList>
            <person name="Bian Y."/>
            <person name="Song C."/>
            <person name="Cheng K."/>
            <person name="Dong M."/>
            <person name="Wang F."/>
            <person name="Huang J."/>
            <person name="Sun D."/>
            <person name="Wang L."/>
            <person name="Ye M."/>
            <person name="Zou H."/>
        </authorList>
    </citation>
    <scope>PHOSPHORYLATION [LARGE SCALE ANALYSIS] AT SER-18; SER-27; SER-35 AND SER-44</scope>
    <scope>IDENTIFICATION BY MASS SPECTROMETRY [LARGE SCALE ANALYSIS]</scope>
    <source>
        <tissue>Liver</tissue>
    </source>
</reference>
<reference key="18">
    <citation type="journal article" date="2015" name="Proteomics">
        <title>N-terminome analysis of the human mitochondrial proteome.</title>
        <authorList>
            <person name="Vaca Jacome A.S."/>
            <person name="Rabilloud T."/>
            <person name="Schaeffer-Reiss C."/>
            <person name="Rompais M."/>
            <person name="Ayoub D."/>
            <person name="Lane L."/>
            <person name="Bairoch A."/>
            <person name="Van Dorsselaer A."/>
            <person name="Carapito C."/>
        </authorList>
    </citation>
    <scope>IDENTIFICATION BY MASS SPECTROMETRY [LARGE SCALE ANALYSIS]</scope>
</reference>
<feature type="initiator methionine" description="Removed" evidence="7 10">
    <location>
        <position position="1"/>
    </location>
</feature>
<feature type="chain" id="PRO_0000160918" description="Synaptic vesicle membrane protein VAT-1 homolog">
    <location>
        <begin position="2"/>
        <end position="393"/>
    </location>
</feature>
<feature type="region of interest" description="Disordered" evidence="3">
    <location>
        <begin position="1"/>
        <end position="40"/>
    </location>
</feature>
<feature type="modified residue" description="N-acetylserine" evidence="7 10">
    <location>
        <position position="2"/>
    </location>
</feature>
<feature type="modified residue" description="Phosphoserine" evidence="2">
    <location>
        <position position="2"/>
    </location>
</feature>
<feature type="modified residue" description="Phosphoserine" evidence="11 12">
    <location>
        <position position="18"/>
    </location>
</feature>
<feature type="modified residue" description="Phosphoserine" evidence="12">
    <location>
        <position position="27"/>
    </location>
</feature>
<feature type="modified residue" description="Phosphoserine" evidence="12">
    <location>
        <position position="35"/>
    </location>
</feature>
<feature type="modified residue" description="Phosphoserine" evidence="12">
    <location>
        <position position="44"/>
    </location>
</feature>
<feature type="splice variant" id="VSP_055794" description="In isoform 2." evidence="8">
    <location>
        <begin position="1"/>
        <end position="134"/>
    </location>
</feature>
<feature type="splice variant" id="VSP_055795" description="In isoform 3." evidence="8">
    <location>
        <begin position="61"/>
        <end position="128"/>
    </location>
</feature>
<feature type="sequence conflict" description="In Ref. 1; AAC37596." evidence="9" ref="1">
    <original>P</original>
    <variation>A</variation>
    <location>
        <position position="71"/>
    </location>
</feature>
<feature type="sequence conflict" description="In Ref. 8; AAA95990." evidence="9" ref="8">
    <original>RLRAC</original>
    <variation>NSARG</variation>
    <location>
        <begin position="82"/>
        <end position="86"/>
    </location>
</feature>
<feature type="sequence conflict" description="In Ref. 8; AAA95990." evidence="9" ref="8">
    <original>QL</original>
    <variation>HV</variation>
    <location>
        <begin position="207"/>
        <end position="208"/>
    </location>
</feature>
<feature type="sequence conflict" description="In Ref. 1; AAC37596." evidence="9" ref="1">
    <original>E</original>
    <variation>Q</variation>
    <location>
        <position position="392"/>
    </location>
</feature>
<feature type="sequence conflict" description="In Ref. 8; AAA95990." evidence="9" ref="8">
    <original>N</original>
    <variation>S</variation>
    <location>
        <position position="393"/>
    </location>
</feature>
<feature type="strand" evidence="13">
    <location>
        <begin position="47"/>
        <end position="53"/>
    </location>
</feature>
<feature type="strand" evidence="13">
    <location>
        <begin position="55"/>
        <end position="58"/>
    </location>
</feature>
<feature type="helix" evidence="13">
    <location>
        <begin position="59"/>
        <end position="61"/>
    </location>
</feature>
<feature type="strand" evidence="13">
    <location>
        <begin position="62"/>
        <end position="68"/>
    </location>
</feature>
<feature type="strand" evidence="13">
    <location>
        <begin position="78"/>
        <end position="87"/>
    </location>
</feature>
<feature type="helix" evidence="13">
    <location>
        <begin position="90"/>
        <end position="96"/>
    </location>
</feature>
<feature type="strand" evidence="13">
    <location>
        <begin position="105"/>
        <end position="108"/>
    </location>
</feature>
<feature type="strand" evidence="13">
    <location>
        <begin position="112"/>
        <end position="121"/>
    </location>
</feature>
<feature type="strand" evidence="13">
    <location>
        <begin position="133"/>
        <end position="137"/>
    </location>
</feature>
<feature type="strand" evidence="13">
    <location>
        <begin position="143"/>
        <end position="150"/>
    </location>
</feature>
<feature type="helix" evidence="13">
    <location>
        <begin position="151"/>
        <end position="153"/>
    </location>
</feature>
<feature type="strand" evidence="13">
    <location>
        <begin position="154"/>
        <end position="156"/>
    </location>
</feature>
<feature type="helix" evidence="13">
    <location>
        <begin position="163"/>
        <end position="180"/>
    </location>
</feature>
<feature type="turn" evidence="13">
    <location>
        <begin position="181"/>
        <end position="184"/>
    </location>
</feature>
<feature type="strand" evidence="13">
    <location>
        <begin position="191"/>
        <end position="194"/>
    </location>
</feature>
<feature type="turn" evidence="13">
    <location>
        <begin position="195"/>
        <end position="198"/>
    </location>
</feature>
<feature type="helix" evidence="13">
    <location>
        <begin position="200"/>
        <end position="209"/>
    </location>
</feature>
<feature type="strand" evidence="14">
    <location>
        <begin position="212"/>
        <end position="214"/>
    </location>
</feature>
<feature type="strand" evidence="13">
    <location>
        <begin position="216"/>
        <end position="220"/>
    </location>
</feature>
<feature type="helix" evidence="13">
    <location>
        <begin position="223"/>
        <end position="225"/>
    </location>
</feature>
<feature type="helix" evidence="13">
    <location>
        <begin position="226"/>
        <end position="232"/>
    </location>
</feature>
<feature type="strand" evidence="13">
    <location>
        <begin position="235"/>
        <end position="238"/>
    </location>
</feature>
<feature type="turn" evidence="13">
    <location>
        <begin position="240"/>
        <end position="242"/>
    </location>
</feature>
<feature type="helix" evidence="13">
    <location>
        <begin position="245"/>
        <end position="252"/>
    </location>
</feature>
<feature type="strand" evidence="13">
    <location>
        <begin position="257"/>
        <end position="264"/>
    </location>
</feature>
<feature type="helix" evidence="13">
    <location>
        <begin position="267"/>
        <end position="273"/>
    </location>
</feature>
<feature type="strand" evidence="13">
    <location>
        <begin position="276"/>
        <end position="284"/>
    </location>
</feature>
<feature type="helix" evidence="13">
    <location>
        <begin position="288"/>
        <end position="291"/>
    </location>
</feature>
<feature type="strand" evidence="14">
    <location>
        <begin position="293"/>
        <end position="295"/>
    </location>
</feature>
<feature type="helix" evidence="13">
    <location>
        <begin position="303"/>
        <end position="307"/>
    </location>
</feature>
<feature type="strand" evidence="13">
    <location>
        <begin position="310"/>
        <end position="312"/>
    </location>
</feature>
<feature type="helix" evidence="13">
    <location>
        <begin position="313"/>
        <end position="319"/>
    </location>
</feature>
<feature type="strand" evidence="13">
    <location>
        <begin position="322"/>
        <end position="325"/>
    </location>
</feature>
<feature type="helix" evidence="13">
    <location>
        <begin position="328"/>
        <end position="330"/>
    </location>
</feature>
<feature type="turn" evidence="15">
    <location>
        <begin position="331"/>
        <end position="333"/>
    </location>
</feature>
<feature type="helix" evidence="13">
    <location>
        <begin position="335"/>
        <end position="350"/>
    </location>
</feature>
<feature type="strand" evidence="13">
    <location>
        <begin position="358"/>
        <end position="363"/>
    </location>
</feature>
<feature type="helix" evidence="13">
    <location>
        <begin position="364"/>
        <end position="366"/>
    </location>
</feature>
<feature type="helix" evidence="13">
    <location>
        <begin position="367"/>
        <end position="375"/>
    </location>
</feature>
<feature type="strand" evidence="13">
    <location>
        <begin position="380"/>
        <end position="386"/>
    </location>
</feature>
<evidence type="ECO:0000250" key="1"/>
<evidence type="ECO:0000250" key="2">
    <source>
        <dbReference type="UniProtKB" id="Q3MIE4"/>
    </source>
</evidence>
<evidence type="ECO:0000256" key="3">
    <source>
        <dbReference type="SAM" id="MobiDB-lite"/>
    </source>
</evidence>
<evidence type="ECO:0000269" key="4">
    <source>
    </source>
</evidence>
<evidence type="ECO:0000269" key="5">
    <source>
    </source>
</evidence>
<evidence type="ECO:0000269" key="6">
    <source>
    </source>
</evidence>
<evidence type="ECO:0000269" key="7">
    <source ref="7"/>
</evidence>
<evidence type="ECO:0000303" key="8">
    <source>
    </source>
</evidence>
<evidence type="ECO:0000305" key="9"/>
<evidence type="ECO:0007744" key="10">
    <source>
    </source>
</evidence>
<evidence type="ECO:0007744" key="11">
    <source>
    </source>
</evidence>
<evidence type="ECO:0007744" key="12">
    <source>
    </source>
</evidence>
<evidence type="ECO:0007829" key="13">
    <source>
        <dbReference type="PDB" id="6K9Y"/>
    </source>
</evidence>
<evidence type="ECO:0007829" key="14">
    <source>
        <dbReference type="PDB" id="6LHR"/>
    </source>
</evidence>
<evidence type="ECO:0007829" key="15">
    <source>
        <dbReference type="PDB" id="6LII"/>
    </source>
</evidence>
<gene>
    <name type="primary">VAT1</name>
</gene>
<sequence>MSDEREVAEAATGEDASSPPPKTEAASDPQHPAASEGAAAAAASPPLLRCLVLTGFGGYDKVKLQSRPAAPPAPGPGQLTLRLRACGLNFADLMARQGLYDRLPPLPVTPGMEGAGVVIAVGEGVSDRKAGDRVMVLNRSGMWQEEVTVPSVQTFLIPEAMTFEEAAALLVNYITAYMVLFDFGNLQPGHSVLVHMAAGGVGMAAVQLCRTVENVTVFGTASASKHEALKENGVTHPIDYHTTDYVDEIKKISPKGVDIVMDPLGGSDTAKGYNLLKPMGKVVTYGMANLLTGPKRNLMALARTWWNQFSVTALQLLQANRAVCGFHLGYLDGEVELVSGVVARLLALYNQGHIKPHIDSVWPFEKVADAMKQMQEKKNVGKVLLVPGPEKEN</sequence>
<comment type="function">
    <text evidence="1 4 5 6">Possesses ATPase activity (By similarity). Plays a part in calcium-regulated keratinocyte activation in epidermal repair mechanisms. Has no effect on cell proliferation. Negatively regulates mitochondrial fusion in cooperation with mitofusin proteins (MFN1-2).</text>
</comment>
<comment type="interaction">
    <interactant intactId="EBI-2514883">
        <id>Q99536</id>
    </interactant>
    <interactant intactId="EBI-12188331">
        <id>P60201-2</id>
        <label>PLP1</label>
    </interactant>
    <organismsDiffer>false</organismsDiffer>
    <experiments>3</experiments>
</comment>
<comment type="subcellular location">
    <subcellularLocation>
        <location>Cytoplasm</location>
    </subcellularLocation>
    <subcellularLocation>
        <location>Mitochondrion outer membrane</location>
        <topology>Peripheral membrane protein</topology>
    </subcellularLocation>
    <text evidence="1">The majority is localized in the cytoplasm and a small amount is associated with mitochondria.</text>
</comment>
<comment type="alternative products">
    <event type="alternative splicing"/>
    <isoform>
        <id>Q99536-1</id>
        <name>1</name>
        <sequence type="displayed"/>
    </isoform>
    <isoform>
        <id>Q99536-2</id>
        <name>2</name>
        <sequence type="described" ref="VSP_055794"/>
    </isoform>
    <isoform>
        <id>Q99536-3</id>
        <name>3</name>
        <sequence type="described" ref="VSP_055795"/>
    </isoform>
</comment>
<comment type="tissue specificity">
    <text evidence="6">Expressed in brain. Also expressed in glioblastoma cells.</text>
</comment>
<comment type="induction">
    <text evidence="6">Increased expression in glioblastomas and on wounding, in basal keratinocytes. This expression is calcium ion-dependent.</text>
</comment>
<comment type="similarity">
    <text evidence="9">Belongs to the zinc-containing alcohol dehydrogenase family. Quinone oxidoreductase subfamily.</text>
</comment>
<comment type="sequence caution" evidence="9">
    <conflict type="erroneous initiation">
        <sequence resource="EMBL-CDS" id="AAC37596"/>
    </conflict>
    <text>Truncated N-terminus.</text>
</comment>
<keyword id="KW-0002">3D-structure</keyword>
<keyword id="KW-0007">Acetylation</keyword>
<keyword id="KW-0025">Alternative splicing</keyword>
<keyword id="KW-0963">Cytoplasm</keyword>
<keyword id="KW-0903">Direct protein sequencing</keyword>
<keyword id="KW-0472">Membrane</keyword>
<keyword id="KW-0496">Mitochondrion</keyword>
<keyword id="KW-1000">Mitochondrion outer membrane</keyword>
<keyword id="KW-0560">Oxidoreductase</keyword>
<keyword id="KW-0597">Phosphoprotein</keyword>
<keyword id="KW-1267">Proteomics identification</keyword>
<keyword id="KW-1185">Reference proteome</keyword>